<dbReference type="EC" id="3.5.4.16" evidence="2"/>
<dbReference type="EMBL" id="AE017355">
    <property type="protein sequence ID" value="AAT63225.1"/>
    <property type="molecule type" value="Genomic_DNA"/>
</dbReference>
<dbReference type="RefSeq" id="WP_001151482.1">
    <property type="nucleotide sequence ID" value="NC_005957.1"/>
</dbReference>
<dbReference type="RefSeq" id="YP_035727.1">
    <property type="nucleotide sequence ID" value="NC_005957.1"/>
</dbReference>
<dbReference type="SMR" id="Q6HL44"/>
<dbReference type="GeneID" id="93009529"/>
<dbReference type="KEGG" id="btk:BT9727_1393"/>
<dbReference type="PATRIC" id="fig|281309.8.peg.1465"/>
<dbReference type="HOGENOM" id="CLU_049768_3_3_9"/>
<dbReference type="UniPathway" id="UPA00848">
    <property type="reaction ID" value="UER00151"/>
</dbReference>
<dbReference type="Proteomes" id="UP000001301">
    <property type="component" value="Chromosome"/>
</dbReference>
<dbReference type="GO" id="GO:0005737">
    <property type="term" value="C:cytoplasm"/>
    <property type="evidence" value="ECO:0007669"/>
    <property type="project" value="TreeGrafter"/>
</dbReference>
<dbReference type="GO" id="GO:0005525">
    <property type="term" value="F:GTP binding"/>
    <property type="evidence" value="ECO:0007669"/>
    <property type="project" value="UniProtKB-KW"/>
</dbReference>
<dbReference type="GO" id="GO:0003934">
    <property type="term" value="F:GTP cyclohydrolase I activity"/>
    <property type="evidence" value="ECO:0007669"/>
    <property type="project" value="UniProtKB-UniRule"/>
</dbReference>
<dbReference type="GO" id="GO:0008270">
    <property type="term" value="F:zinc ion binding"/>
    <property type="evidence" value="ECO:0007669"/>
    <property type="project" value="UniProtKB-UniRule"/>
</dbReference>
<dbReference type="GO" id="GO:0006730">
    <property type="term" value="P:one-carbon metabolic process"/>
    <property type="evidence" value="ECO:0007669"/>
    <property type="project" value="UniProtKB-UniRule"/>
</dbReference>
<dbReference type="GO" id="GO:0006729">
    <property type="term" value="P:tetrahydrobiopterin biosynthetic process"/>
    <property type="evidence" value="ECO:0007669"/>
    <property type="project" value="TreeGrafter"/>
</dbReference>
<dbReference type="GO" id="GO:0046654">
    <property type="term" value="P:tetrahydrofolate biosynthetic process"/>
    <property type="evidence" value="ECO:0007669"/>
    <property type="project" value="UniProtKB-UniRule"/>
</dbReference>
<dbReference type="CDD" id="cd00642">
    <property type="entry name" value="GTP_cyclohydro1"/>
    <property type="match status" value="1"/>
</dbReference>
<dbReference type="FunFam" id="1.10.286.10:FF:000001">
    <property type="entry name" value="GTP cyclohydrolase 1"/>
    <property type="match status" value="1"/>
</dbReference>
<dbReference type="FunFam" id="3.30.1130.10:FF:000001">
    <property type="entry name" value="GTP cyclohydrolase 1"/>
    <property type="match status" value="1"/>
</dbReference>
<dbReference type="Gene3D" id="1.10.286.10">
    <property type="match status" value="1"/>
</dbReference>
<dbReference type="Gene3D" id="3.30.1130.10">
    <property type="match status" value="1"/>
</dbReference>
<dbReference type="HAMAP" id="MF_00223">
    <property type="entry name" value="FolE"/>
    <property type="match status" value="1"/>
</dbReference>
<dbReference type="InterPro" id="IPR043133">
    <property type="entry name" value="GTP-CH-I_C/QueF"/>
</dbReference>
<dbReference type="InterPro" id="IPR043134">
    <property type="entry name" value="GTP-CH-I_N"/>
</dbReference>
<dbReference type="InterPro" id="IPR001474">
    <property type="entry name" value="GTP_CycHdrlase_I"/>
</dbReference>
<dbReference type="InterPro" id="IPR018234">
    <property type="entry name" value="GTP_CycHdrlase_I_CS"/>
</dbReference>
<dbReference type="InterPro" id="IPR020602">
    <property type="entry name" value="GTP_CycHdrlase_I_dom"/>
</dbReference>
<dbReference type="NCBIfam" id="TIGR00063">
    <property type="entry name" value="folE"/>
    <property type="match status" value="1"/>
</dbReference>
<dbReference type="NCBIfam" id="NF006825">
    <property type="entry name" value="PRK09347.1-2"/>
    <property type="match status" value="1"/>
</dbReference>
<dbReference type="NCBIfam" id="NF006826">
    <property type="entry name" value="PRK09347.1-3"/>
    <property type="match status" value="1"/>
</dbReference>
<dbReference type="PANTHER" id="PTHR11109:SF7">
    <property type="entry name" value="GTP CYCLOHYDROLASE 1"/>
    <property type="match status" value="1"/>
</dbReference>
<dbReference type="PANTHER" id="PTHR11109">
    <property type="entry name" value="GTP CYCLOHYDROLASE I"/>
    <property type="match status" value="1"/>
</dbReference>
<dbReference type="Pfam" id="PF01227">
    <property type="entry name" value="GTP_cyclohydroI"/>
    <property type="match status" value="1"/>
</dbReference>
<dbReference type="SUPFAM" id="SSF55620">
    <property type="entry name" value="Tetrahydrobiopterin biosynthesis enzymes-like"/>
    <property type="match status" value="1"/>
</dbReference>
<dbReference type="PROSITE" id="PS00859">
    <property type="entry name" value="GTP_CYCLOHYDROL_1_1"/>
    <property type="match status" value="1"/>
</dbReference>
<dbReference type="PROSITE" id="PS00860">
    <property type="entry name" value="GTP_CYCLOHYDROL_1_2"/>
    <property type="match status" value="1"/>
</dbReference>
<evidence type="ECO:0000250" key="1"/>
<evidence type="ECO:0000255" key="2">
    <source>
        <dbReference type="HAMAP-Rule" id="MF_00223"/>
    </source>
</evidence>
<keyword id="KW-0342">GTP-binding</keyword>
<keyword id="KW-0378">Hydrolase</keyword>
<keyword id="KW-0479">Metal-binding</keyword>
<keyword id="KW-0547">Nucleotide-binding</keyword>
<keyword id="KW-0554">One-carbon metabolism</keyword>
<keyword id="KW-0862">Zinc</keyword>
<organism>
    <name type="scientific">Bacillus thuringiensis subsp. konkukian (strain 97-27)</name>
    <dbReference type="NCBI Taxonomy" id="281309"/>
    <lineage>
        <taxon>Bacteria</taxon>
        <taxon>Bacillati</taxon>
        <taxon>Bacillota</taxon>
        <taxon>Bacilli</taxon>
        <taxon>Bacillales</taxon>
        <taxon>Bacillaceae</taxon>
        <taxon>Bacillus</taxon>
        <taxon>Bacillus cereus group</taxon>
    </lineage>
</organism>
<protein>
    <recommendedName>
        <fullName evidence="2">GTP cyclohydrolase 1</fullName>
        <ecNumber evidence="2">3.5.4.16</ecNumber>
    </recommendedName>
    <alternativeName>
        <fullName evidence="2">GTP cyclohydrolase I</fullName>
        <shortName evidence="2">GTP-CH-I</shortName>
    </alternativeName>
</protein>
<feature type="chain" id="PRO_1000043663" description="GTP cyclohydrolase 1">
    <location>
        <begin position="1"/>
        <end position="189"/>
    </location>
</feature>
<feature type="binding site" evidence="2">
    <location>
        <position position="78"/>
    </location>
    <ligand>
        <name>Zn(2+)</name>
        <dbReference type="ChEBI" id="CHEBI:29105"/>
    </ligand>
</feature>
<feature type="binding site" evidence="2">
    <location>
        <position position="81"/>
    </location>
    <ligand>
        <name>Zn(2+)</name>
        <dbReference type="ChEBI" id="CHEBI:29105"/>
    </ligand>
</feature>
<feature type="binding site" evidence="2">
    <location>
        <position position="150"/>
    </location>
    <ligand>
        <name>Zn(2+)</name>
        <dbReference type="ChEBI" id="CHEBI:29105"/>
    </ligand>
</feature>
<reference key="1">
    <citation type="journal article" date="2006" name="J. Bacteriol.">
        <title>Pathogenomic sequence analysis of Bacillus cereus and Bacillus thuringiensis isolates closely related to Bacillus anthracis.</title>
        <authorList>
            <person name="Han C.S."/>
            <person name="Xie G."/>
            <person name="Challacombe J.F."/>
            <person name="Altherr M.R."/>
            <person name="Bhotika S.S."/>
            <person name="Bruce D."/>
            <person name="Campbell C.S."/>
            <person name="Campbell M.L."/>
            <person name="Chen J."/>
            <person name="Chertkov O."/>
            <person name="Cleland C."/>
            <person name="Dimitrijevic M."/>
            <person name="Doggett N.A."/>
            <person name="Fawcett J.J."/>
            <person name="Glavina T."/>
            <person name="Goodwin L.A."/>
            <person name="Hill K.K."/>
            <person name="Hitchcock P."/>
            <person name="Jackson P.J."/>
            <person name="Keim P."/>
            <person name="Kewalramani A.R."/>
            <person name="Longmire J."/>
            <person name="Lucas S."/>
            <person name="Malfatti S."/>
            <person name="McMurry K."/>
            <person name="Meincke L.J."/>
            <person name="Misra M."/>
            <person name="Moseman B.L."/>
            <person name="Mundt M."/>
            <person name="Munk A.C."/>
            <person name="Okinaka R.T."/>
            <person name="Parson-Quintana B."/>
            <person name="Reilly L.P."/>
            <person name="Richardson P."/>
            <person name="Robinson D.L."/>
            <person name="Rubin E."/>
            <person name="Saunders E."/>
            <person name="Tapia R."/>
            <person name="Tesmer J.G."/>
            <person name="Thayer N."/>
            <person name="Thompson L.S."/>
            <person name="Tice H."/>
            <person name="Ticknor L.O."/>
            <person name="Wills P.L."/>
            <person name="Brettin T.S."/>
            <person name="Gilna P."/>
        </authorList>
    </citation>
    <scope>NUCLEOTIDE SEQUENCE [LARGE SCALE GENOMIC DNA]</scope>
    <source>
        <strain>97-27</strain>
    </source>
</reference>
<accession>Q6HL44</accession>
<gene>
    <name evidence="2" type="primary">folE</name>
    <name type="ordered locus">BT9727_1393</name>
</gene>
<sequence>MAKVNLEQIEHAVRLILEAIGDDPNREGVLDTPKRVAKMYAEVFSGMHEDPKEHLHKVFGEDHEELVLVKDIPFYSMCEHHLVPFYGVAHVAYIPQGGKVTGLSKLARTVDTIARRPQLQERITSTVANSIMEVLEPHGVMVVVEAEHMCMTMRGVKKPGAKTVTTAVRGVLENDAAARSEILSFIKTK</sequence>
<name>GCH1_BACHK</name>
<comment type="catalytic activity">
    <reaction evidence="2">
        <text>GTP + H2O = 7,8-dihydroneopterin 3'-triphosphate + formate + H(+)</text>
        <dbReference type="Rhea" id="RHEA:17473"/>
        <dbReference type="ChEBI" id="CHEBI:15377"/>
        <dbReference type="ChEBI" id="CHEBI:15378"/>
        <dbReference type="ChEBI" id="CHEBI:15740"/>
        <dbReference type="ChEBI" id="CHEBI:37565"/>
        <dbReference type="ChEBI" id="CHEBI:58462"/>
        <dbReference type="EC" id="3.5.4.16"/>
    </reaction>
</comment>
<comment type="pathway">
    <text evidence="2">Cofactor biosynthesis; 7,8-dihydroneopterin triphosphate biosynthesis; 7,8-dihydroneopterin triphosphate from GTP: step 1/1.</text>
</comment>
<comment type="subunit">
    <text evidence="1">Toroid-shaped homodecamer, composed of two pentamers of five dimers.</text>
</comment>
<comment type="similarity">
    <text evidence="2">Belongs to the GTP cyclohydrolase I family.</text>
</comment>
<proteinExistence type="inferred from homology"/>